<protein>
    <recommendedName>
        <fullName evidence="1">Probable GTP-binding protein EngB</fullName>
    </recommendedName>
</protein>
<keyword id="KW-0002">3D-structure</keyword>
<keyword id="KW-0131">Cell cycle</keyword>
<keyword id="KW-0132">Cell division</keyword>
<keyword id="KW-0342">GTP-binding</keyword>
<keyword id="KW-0460">Magnesium</keyword>
<keyword id="KW-0479">Metal-binding</keyword>
<keyword id="KW-0547">Nucleotide-binding</keyword>
<keyword id="KW-0717">Septation</keyword>
<feature type="chain" id="PRO_1000115989" description="Probable GTP-binding protein EngB">
    <location>
        <begin position="1"/>
        <end position="209"/>
    </location>
</feature>
<feature type="domain" description="EngB-type G" evidence="1">
    <location>
        <begin position="22"/>
        <end position="198"/>
    </location>
</feature>
<feature type="binding site" evidence="1">
    <location>
        <position position="37"/>
    </location>
    <ligand>
        <name>Mg(2+)</name>
        <dbReference type="ChEBI" id="CHEBI:18420"/>
    </ligand>
</feature>
<feature type="binding site" evidence="1">
    <location>
        <position position="59"/>
    </location>
    <ligand>
        <name>Mg(2+)</name>
        <dbReference type="ChEBI" id="CHEBI:18420"/>
    </ligand>
</feature>
<feature type="strand" evidence="2">
    <location>
        <begin position="8"/>
        <end position="15"/>
    </location>
</feature>
<feature type="helix" evidence="2">
    <location>
        <begin position="16"/>
        <end position="18"/>
    </location>
</feature>
<feature type="strand" evidence="2">
    <location>
        <begin position="23"/>
        <end position="31"/>
    </location>
</feature>
<feature type="helix" evidence="2">
    <location>
        <begin position="36"/>
        <end position="44"/>
    </location>
</feature>
<feature type="strand" evidence="2">
    <location>
        <begin position="62"/>
        <end position="66"/>
    </location>
</feature>
<feature type="strand" evidence="2">
    <location>
        <begin position="72"/>
        <end position="75"/>
    </location>
</feature>
<feature type="helix" evidence="2">
    <location>
        <begin position="86"/>
        <end position="102"/>
    </location>
</feature>
<feature type="strand" evidence="2">
    <location>
        <begin position="106"/>
        <end position="114"/>
    </location>
</feature>
<feature type="helix" evidence="2">
    <location>
        <begin position="121"/>
        <end position="131"/>
    </location>
</feature>
<feature type="strand" evidence="2">
    <location>
        <begin position="137"/>
        <end position="142"/>
    </location>
</feature>
<feature type="helix" evidence="2">
    <location>
        <begin position="144"/>
        <end position="146"/>
    </location>
</feature>
<feature type="helix" evidence="2">
    <location>
        <begin position="149"/>
        <end position="163"/>
    </location>
</feature>
<feature type="helix" evidence="2">
    <location>
        <begin position="164"/>
        <end position="168"/>
    </location>
</feature>
<feature type="strand" evidence="2">
    <location>
        <begin position="172"/>
        <end position="176"/>
    </location>
</feature>
<feature type="turn" evidence="2">
    <location>
        <begin position="179"/>
        <end position="182"/>
    </location>
</feature>
<feature type="helix" evidence="2">
    <location>
        <begin position="185"/>
        <end position="198"/>
    </location>
</feature>
<evidence type="ECO:0000255" key="1">
    <source>
        <dbReference type="HAMAP-Rule" id="MF_00321"/>
    </source>
</evidence>
<evidence type="ECO:0007829" key="2">
    <source>
        <dbReference type="PDB" id="5UCV"/>
    </source>
</evidence>
<name>ENGB_NEIG2</name>
<comment type="function">
    <text evidence="1">Necessary for normal cell division and for the maintenance of normal septation.</text>
</comment>
<comment type="cofactor">
    <cofactor evidence="1">
        <name>Mg(2+)</name>
        <dbReference type="ChEBI" id="CHEBI:18420"/>
    </cofactor>
</comment>
<comment type="similarity">
    <text evidence="1">Belongs to the TRAFAC class TrmE-Era-EngA-EngB-Septin-like GTPase superfamily. EngB GTPase family.</text>
</comment>
<dbReference type="EMBL" id="CP001050">
    <property type="protein sequence ID" value="ACF28841.1"/>
    <property type="molecule type" value="Genomic_DNA"/>
</dbReference>
<dbReference type="PDB" id="5UCV">
    <property type="method" value="X-ray"/>
    <property type="resolution" value="1.80 A"/>
    <property type="chains" value="A/B=1-209"/>
</dbReference>
<dbReference type="PDBsum" id="5UCV"/>
<dbReference type="SMR" id="B4RQ29"/>
<dbReference type="KEGG" id="ngk:NGK_0143"/>
<dbReference type="HOGENOM" id="CLU_033732_1_0_4"/>
<dbReference type="Proteomes" id="UP000002564">
    <property type="component" value="Chromosome"/>
</dbReference>
<dbReference type="GO" id="GO:0005829">
    <property type="term" value="C:cytosol"/>
    <property type="evidence" value="ECO:0007669"/>
    <property type="project" value="TreeGrafter"/>
</dbReference>
<dbReference type="GO" id="GO:0005525">
    <property type="term" value="F:GTP binding"/>
    <property type="evidence" value="ECO:0007669"/>
    <property type="project" value="UniProtKB-UniRule"/>
</dbReference>
<dbReference type="GO" id="GO:0046872">
    <property type="term" value="F:metal ion binding"/>
    <property type="evidence" value="ECO:0007669"/>
    <property type="project" value="UniProtKB-KW"/>
</dbReference>
<dbReference type="GO" id="GO:0000917">
    <property type="term" value="P:division septum assembly"/>
    <property type="evidence" value="ECO:0007669"/>
    <property type="project" value="UniProtKB-KW"/>
</dbReference>
<dbReference type="CDD" id="cd01876">
    <property type="entry name" value="YihA_EngB"/>
    <property type="match status" value="1"/>
</dbReference>
<dbReference type="FunFam" id="3.40.50.300:FF:000098">
    <property type="entry name" value="Probable GTP-binding protein EngB"/>
    <property type="match status" value="1"/>
</dbReference>
<dbReference type="Gene3D" id="3.40.50.300">
    <property type="entry name" value="P-loop containing nucleotide triphosphate hydrolases"/>
    <property type="match status" value="1"/>
</dbReference>
<dbReference type="HAMAP" id="MF_00321">
    <property type="entry name" value="GTPase_EngB"/>
    <property type="match status" value="1"/>
</dbReference>
<dbReference type="InterPro" id="IPR030393">
    <property type="entry name" value="G_ENGB_dom"/>
</dbReference>
<dbReference type="InterPro" id="IPR006073">
    <property type="entry name" value="GTP-bd"/>
</dbReference>
<dbReference type="InterPro" id="IPR019987">
    <property type="entry name" value="GTP-bd_ribosome_bio_YsxC"/>
</dbReference>
<dbReference type="InterPro" id="IPR027417">
    <property type="entry name" value="P-loop_NTPase"/>
</dbReference>
<dbReference type="NCBIfam" id="TIGR03598">
    <property type="entry name" value="GTPase_YsxC"/>
    <property type="match status" value="1"/>
</dbReference>
<dbReference type="PANTHER" id="PTHR11649:SF13">
    <property type="entry name" value="ENGB-TYPE G DOMAIN-CONTAINING PROTEIN"/>
    <property type="match status" value="1"/>
</dbReference>
<dbReference type="PANTHER" id="PTHR11649">
    <property type="entry name" value="MSS1/TRME-RELATED GTP-BINDING PROTEIN"/>
    <property type="match status" value="1"/>
</dbReference>
<dbReference type="Pfam" id="PF01926">
    <property type="entry name" value="MMR_HSR1"/>
    <property type="match status" value="1"/>
</dbReference>
<dbReference type="SUPFAM" id="SSF52540">
    <property type="entry name" value="P-loop containing nucleoside triphosphate hydrolases"/>
    <property type="match status" value="1"/>
</dbReference>
<dbReference type="PROSITE" id="PS51706">
    <property type="entry name" value="G_ENGB"/>
    <property type="match status" value="1"/>
</dbReference>
<organism>
    <name type="scientific">Neisseria gonorrhoeae (strain NCCP11945)</name>
    <dbReference type="NCBI Taxonomy" id="521006"/>
    <lineage>
        <taxon>Bacteria</taxon>
        <taxon>Pseudomonadati</taxon>
        <taxon>Pseudomonadota</taxon>
        <taxon>Betaproteobacteria</taxon>
        <taxon>Neisseriales</taxon>
        <taxon>Neisseriaceae</taxon>
        <taxon>Neisseria</taxon>
    </lineage>
</organism>
<reference key="1">
    <citation type="journal article" date="2008" name="J. Bacteriol.">
        <title>Complete genome sequence of Neisseria gonorrhoeae NCCP11945.</title>
        <authorList>
            <person name="Chung G.T."/>
            <person name="Yoo J.S."/>
            <person name="Oh H.B."/>
            <person name="Lee Y.S."/>
            <person name="Cha S.H."/>
            <person name="Kim S.J."/>
            <person name="Yoo C.K."/>
        </authorList>
    </citation>
    <scope>NUCLEOTIDE SEQUENCE [LARGE SCALE GENOMIC DNA]</scope>
    <source>
        <strain>NCCP11945</strain>
    </source>
</reference>
<gene>
    <name evidence="1" type="primary">engB</name>
    <name type="ordered locus">NGK_0143</name>
</gene>
<proteinExistence type="evidence at protein level"/>
<sequence length="209" mass="23600">MNLFQNAKFFTTVNHLKDLPDTPLEIAFVGRSNAGKSSAINTLTNHVRLAYVSKTPGRTQHINFFELQNGNFMVDLPGYGYAQVPEAVRAHWVNLLGDYLRHRKQLIGLVLIMDARHPLKELDIRMLDFFHTTGRPVHILLSKADKLSKNEQIKTLSQVKKLLKPYSDRQNISVQLFSSLKKQGIDEANRTVGSWFDAADAAASSPEEN</sequence>
<accession>B4RQ29</accession>